<organism>
    <name type="scientific">Cycas taitungensis</name>
    <name type="common">Prince sago</name>
    <name type="synonym">Cycas taiwaniana</name>
    <dbReference type="NCBI Taxonomy" id="54799"/>
    <lineage>
        <taxon>Eukaryota</taxon>
        <taxon>Viridiplantae</taxon>
        <taxon>Streptophyta</taxon>
        <taxon>Embryophyta</taxon>
        <taxon>Tracheophyta</taxon>
        <taxon>Spermatophyta</taxon>
        <taxon>Cycadidae</taxon>
        <taxon>Cycadales</taxon>
        <taxon>Cycadaceae</taxon>
        <taxon>Cycas</taxon>
    </lineage>
</organism>
<name>RR8_CYCTA</name>
<comment type="function">
    <text evidence="1">One of the primary rRNA binding proteins, it binds directly to 16S rRNA central domain where it helps coordinate assembly of the platform of the 30S subunit.</text>
</comment>
<comment type="subunit">
    <text evidence="1">Part of the 30S ribosomal subunit.</text>
</comment>
<comment type="subcellular location">
    <subcellularLocation>
        <location>Plastid</location>
        <location>Chloroplast</location>
    </subcellularLocation>
</comment>
<comment type="similarity">
    <text evidence="2">Belongs to the universal ribosomal protein uS8 family.</text>
</comment>
<dbReference type="EMBL" id="AP009339">
    <property type="protein sequence ID" value="BAF64983.1"/>
    <property type="molecule type" value="Genomic_DNA"/>
</dbReference>
<dbReference type="RefSeq" id="YP_001312242.1">
    <property type="nucleotide sequence ID" value="NC_009618.1"/>
</dbReference>
<dbReference type="SMR" id="A6H5L7"/>
<dbReference type="GeneID" id="5309593"/>
<dbReference type="GO" id="GO:0009507">
    <property type="term" value="C:chloroplast"/>
    <property type="evidence" value="ECO:0007669"/>
    <property type="project" value="UniProtKB-SubCell"/>
</dbReference>
<dbReference type="GO" id="GO:1990904">
    <property type="term" value="C:ribonucleoprotein complex"/>
    <property type="evidence" value="ECO:0007669"/>
    <property type="project" value="UniProtKB-KW"/>
</dbReference>
<dbReference type="GO" id="GO:0005840">
    <property type="term" value="C:ribosome"/>
    <property type="evidence" value="ECO:0007669"/>
    <property type="project" value="UniProtKB-KW"/>
</dbReference>
<dbReference type="GO" id="GO:0019843">
    <property type="term" value="F:rRNA binding"/>
    <property type="evidence" value="ECO:0007669"/>
    <property type="project" value="UniProtKB-UniRule"/>
</dbReference>
<dbReference type="GO" id="GO:0003735">
    <property type="term" value="F:structural constituent of ribosome"/>
    <property type="evidence" value="ECO:0007669"/>
    <property type="project" value="InterPro"/>
</dbReference>
<dbReference type="GO" id="GO:0006412">
    <property type="term" value="P:translation"/>
    <property type="evidence" value="ECO:0007669"/>
    <property type="project" value="UniProtKB-UniRule"/>
</dbReference>
<dbReference type="FunFam" id="3.30.1490.10:FF:000001">
    <property type="entry name" value="30S ribosomal protein S8"/>
    <property type="match status" value="1"/>
</dbReference>
<dbReference type="Gene3D" id="3.30.1370.30">
    <property type="match status" value="1"/>
</dbReference>
<dbReference type="Gene3D" id="3.30.1490.10">
    <property type="match status" value="1"/>
</dbReference>
<dbReference type="HAMAP" id="MF_01302_B">
    <property type="entry name" value="Ribosomal_uS8_B"/>
    <property type="match status" value="1"/>
</dbReference>
<dbReference type="InterPro" id="IPR000630">
    <property type="entry name" value="Ribosomal_uS8"/>
</dbReference>
<dbReference type="InterPro" id="IPR047863">
    <property type="entry name" value="Ribosomal_uS8_CS"/>
</dbReference>
<dbReference type="InterPro" id="IPR035987">
    <property type="entry name" value="Ribosomal_uS8_sf"/>
</dbReference>
<dbReference type="NCBIfam" id="NF001109">
    <property type="entry name" value="PRK00136.1"/>
    <property type="match status" value="1"/>
</dbReference>
<dbReference type="PANTHER" id="PTHR11758">
    <property type="entry name" value="40S RIBOSOMAL PROTEIN S15A"/>
    <property type="match status" value="1"/>
</dbReference>
<dbReference type="Pfam" id="PF00410">
    <property type="entry name" value="Ribosomal_S8"/>
    <property type="match status" value="1"/>
</dbReference>
<dbReference type="SUPFAM" id="SSF56047">
    <property type="entry name" value="Ribosomal protein S8"/>
    <property type="match status" value="1"/>
</dbReference>
<dbReference type="PROSITE" id="PS00053">
    <property type="entry name" value="RIBOSOMAL_S8"/>
    <property type="match status" value="1"/>
</dbReference>
<geneLocation type="chloroplast"/>
<evidence type="ECO:0000250" key="1"/>
<evidence type="ECO:0000305" key="2"/>
<accession>A6H5L7</accession>
<proteinExistence type="inferred from homology"/>
<gene>
    <name type="primary">rps8</name>
</gene>
<reference key="1">
    <citation type="journal article" date="2007" name="Mol. Biol. Evol.">
        <title>Chloroplast genome (cpDNA) of Cycas taitungensis and 56 cp protein-coding genes of Gnetum parvifolium: insights into cpDNA evolution and phylogeny of extant seed plants.</title>
        <authorList>
            <person name="Wu C.-S."/>
            <person name="Wang Y.-N."/>
            <person name="Liu S.-M."/>
            <person name="Chaw S.-M."/>
        </authorList>
    </citation>
    <scope>NUCLEOTIDE SEQUENCE [LARGE SCALE GENOMIC DNA]</scope>
</reference>
<sequence length="132" mass="14938">MGNDTIANIITSIRNADIVKKKTVRIIATNTTKNVVRILLQEGFIEDAREHREGQKSFSVLTLRYRGRKEKTYITTSKRTSKPGLRIYSNSQKVPKVLGGMGVVILSTSQGIMTDREARRRRIGGEILCYVR</sequence>
<protein>
    <recommendedName>
        <fullName evidence="2">Small ribosomal subunit protein uS8c</fullName>
    </recommendedName>
    <alternativeName>
        <fullName>30S ribosomal protein S8, chloroplastic</fullName>
    </alternativeName>
</protein>
<keyword id="KW-0150">Chloroplast</keyword>
<keyword id="KW-0934">Plastid</keyword>
<keyword id="KW-0687">Ribonucleoprotein</keyword>
<keyword id="KW-0689">Ribosomal protein</keyword>
<keyword id="KW-0694">RNA-binding</keyword>
<keyword id="KW-0699">rRNA-binding</keyword>
<feature type="chain" id="PRO_0000305776" description="Small ribosomal subunit protein uS8c">
    <location>
        <begin position="1"/>
        <end position="132"/>
    </location>
</feature>